<comment type="function">
    <text evidence="1">Thiolesterase that catalyzes the hydrolysis of S-D-lactoyl-glutathione to form glutathione and D-lactic acid.</text>
</comment>
<comment type="catalytic activity">
    <reaction evidence="1">
        <text>an S-(2-hydroxyacyl)glutathione + H2O = a 2-hydroxy carboxylate + glutathione + H(+)</text>
        <dbReference type="Rhea" id="RHEA:21864"/>
        <dbReference type="ChEBI" id="CHEBI:15377"/>
        <dbReference type="ChEBI" id="CHEBI:15378"/>
        <dbReference type="ChEBI" id="CHEBI:57925"/>
        <dbReference type="ChEBI" id="CHEBI:58896"/>
        <dbReference type="ChEBI" id="CHEBI:71261"/>
        <dbReference type="EC" id="3.1.2.6"/>
    </reaction>
</comment>
<comment type="cofactor">
    <cofactor evidence="1">
        <name>Zn(2+)</name>
        <dbReference type="ChEBI" id="CHEBI:29105"/>
    </cofactor>
    <text evidence="1">Binds 2 Zn(2+) ions per subunit.</text>
</comment>
<comment type="pathway">
    <text evidence="1">Secondary metabolite metabolism; methylglyoxal degradation; (R)-lactate from methylglyoxal: step 2/2.</text>
</comment>
<comment type="subunit">
    <text evidence="1">Monomer.</text>
</comment>
<comment type="similarity">
    <text evidence="1">Belongs to the metallo-beta-lactamase superfamily. Glyoxalase II family.</text>
</comment>
<sequence>MLKVEPIPAFQDNYIWAIHDGHSAAVVDPGEAAPVEQFLAQRGLALGAIVITHHHGDHQGGVSDLLARHPSGPNGEPLPVIGPQGERIGHRTQAVREGDTVTLRHPAVTFRVLDVPGHTAGHVAYVGDLPGAGPVVFCGDTLFASGCGRLFEGTPAQMLASLDKLAALPGDTRVYCAHEYTRSNVRFAQAVEPANPDLAAWAARVDILREAGTPTVPTTVAHERAVNPFLRSRESTVRQAVRAQGGDVSGDAAAFGALRGWKDGFR</sequence>
<proteinExistence type="inferred from homology"/>
<feature type="chain" id="PRO_1000144793" description="Hydroxyacylglutathione hydrolase">
    <location>
        <begin position="1"/>
        <end position="266"/>
    </location>
</feature>
<feature type="binding site" evidence="1">
    <location>
        <position position="53"/>
    </location>
    <ligand>
        <name>Zn(2+)</name>
        <dbReference type="ChEBI" id="CHEBI:29105"/>
        <label>1</label>
    </ligand>
</feature>
<feature type="binding site" evidence="1">
    <location>
        <position position="55"/>
    </location>
    <ligand>
        <name>Zn(2+)</name>
        <dbReference type="ChEBI" id="CHEBI:29105"/>
        <label>1</label>
    </ligand>
</feature>
<feature type="binding site" evidence="1">
    <location>
        <position position="57"/>
    </location>
    <ligand>
        <name>Zn(2+)</name>
        <dbReference type="ChEBI" id="CHEBI:29105"/>
        <label>2</label>
    </ligand>
</feature>
<feature type="binding site" evidence="1">
    <location>
        <position position="58"/>
    </location>
    <ligand>
        <name>Zn(2+)</name>
        <dbReference type="ChEBI" id="CHEBI:29105"/>
        <label>2</label>
    </ligand>
</feature>
<feature type="binding site" evidence="1">
    <location>
        <position position="118"/>
    </location>
    <ligand>
        <name>Zn(2+)</name>
        <dbReference type="ChEBI" id="CHEBI:29105"/>
        <label>1</label>
    </ligand>
</feature>
<feature type="binding site" evidence="1">
    <location>
        <position position="140"/>
    </location>
    <ligand>
        <name>Zn(2+)</name>
        <dbReference type="ChEBI" id="CHEBI:29105"/>
        <label>1</label>
    </ligand>
</feature>
<feature type="binding site" evidence="1">
    <location>
        <position position="140"/>
    </location>
    <ligand>
        <name>Zn(2+)</name>
        <dbReference type="ChEBI" id="CHEBI:29105"/>
        <label>2</label>
    </ligand>
</feature>
<feature type="binding site" evidence="1">
    <location>
        <position position="178"/>
    </location>
    <ligand>
        <name>Zn(2+)</name>
        <dbReference type="ChEBI" id="CHEBI:29105"/>
        <label>2</label>
    </ligand>
</feature>
<reference key="1">
    <citation type="journal article" date="2010" name="PLoS ONE">
        <title>The complete genome sequence of Cupriavidus metallidurans strain CH34, a master survivalist in harsh and anthropogenic environments.</title>
        <authorList>
            <person name="Janssen P.J."/>
            <person name="Van Houdt R."/>
            <person name="Moors H."/>
            <person name="Monsieurs P."/>
            <person name="Morin N."/>
            <person name="Michaux A."/>
            <person name="Benotmane M.A."/>
            <person name="Leys N."/>
            <person name="Vallaeys T."/>
            <person name="Lapidus A."/>
            <person name="Monchy S."/>
            <person name="Medigue C."/>
            <person name="Taghavi S."/>
            <person name="McCorkle S."/>
            <person name="Dunn J."/>
            <person name="van der Lelie D."/>
            <person name="Mergeay M."/>
        </authorList>
    </citation>
    <scope>NUCLEOTIDE SEQUENCE [LARGE SCALE GENOMIC DNA]</scope>
    <source>
        <strain>ATCC 43123 / DSM 2839 / NBRC 102507 / CH34</strain>
    </source>
</reference>
<name>GLO2_CUPMC</name>
<organism>
    <name type="scientific">Cupriavidus metallidurans (strain ATCC 43123 / DSM 2839 / NBRC 102507 / CH34)</name>
    <name type="common">Ralstonia metallidurans</name>
    <dbReference type="NCBI Taxonomy" id="266264"/>
    <lineage>
        <taxon>Bacteria</taxon>
        <taxon>Pseudomonadati</taxon>
        <taxon>Pseudomonadota</taxon>
        <taxon>Betaproteobacteria</taxon>
        <taxon>Burkholderiales</taxon>
        <taxon>Burkholderiaceae</taxon>
        <taxon>Cupriavidus</taxon>
    </lineage>
</organism>
<dbReference type="EC" id="3.1.2.6" evidence="1"/>
<dbReference type="EMBL" id="CP000352">
    <property type="protein sequence ID" value="ABF09085.1"/>
    <property type="molecule type" value="Genomic_DNA"/>
</dbReference>
<dbReference type="RefSeq" id="WP_011516913.1">
    <property type="nucleotide sequence ID" value="NC_007973.1"/>
</dbReference>
<dbReference type="SMR" id="Q1LL91"/>
<dbReference type="STRING" id="266264.Rmet_2206"/>
<dbReference type="KEGG" id="rme:Rmet_2206"/>
<dbReference type="eggNOG" id="COG0491">
    <property type="taxonomic scope" value="Bacteria"/>
</dbReference>
<dbReference type="HOGENOM" id="CLU_030571_4_1_4"/>
<dbReference type="UniPathway" id="UPA00619">
    <property type="reaction ID" value="UER00676"/>
</dbReference>
<dbReference type="Proteomes" id="UP000002429">
    <property type="component" value="Chromosome"/>
</dbReference>
<dbReference type="GO" id="GO:0004416">
    <property type="term" value="F:hydroxyacylglutathione hydrolase activity"/>
    <property type="evidence" value="ECO:0007669"/>
    <property type="project" value="UniProtKB-UniRule"/>
</dbReference>
<dbReference type="GO" id="GO:0046872">
    <property type="term" value="F:metal ion binding"/>
    <property type="evidence" value="ECO:0007669"/>
    <property type="project" value="UniProtKB-KW"/>
</dbReference>
<dbReference type="GO" id="GO:0019243">
    <property type="term" value="P:methylglyoxal catabolic process to D-lactate via S-lactoyl-glutathione"/>
    <property type="evidence" value="ECO:0007669"/>
    <property type="project" value="InterPro"/>
</dbReference>
<dbReference type="CDD" id="cd07723">
    <property type="entry name" value="hydroxyacylglutathione_hydrolase_MBL-fold"/>
    <property type="match status" value="1"/>
</dbReference>
<dbReference type="Gene3D" id="3.60.15.10">
    <property type="entry name" value="Ribonuclease Z/Hydroxyacylglutathione hydrolase-like"/>
    <property type="match status" value="1"/>
</dbReference>
<dbReference type="HAMAP" id="MF_01374">
    <property type="entry name" value="Glyoxalase_2"/>
    <property type="match status" value="1"/>
</dbReference>
<dbReference type="InterPro" id="IPR035680">
    <property type="entry name" value="Clx_II_MBL"/>
</dbReference>
<dbReference type="InterPro" id="IPR050110">
    <property type="entry name" value="Glyoxalase_II_hydrolase"/>
</dbReference>
<dbReference type="InterPro" id="IPR032282">
    <property type="entry name" value="HAGH_C"/>
</dbReference>
<dbReference type="InterPro" id="IPR017782">
    <property type="entry name" value="Hydroxyacylglutathione_Hdrlase"/>
</dbReference>
<dbReference type="InterPro" id="IPR001279">
    <property type="entry name" value="Metallo-B-lactamas"/>
</dbReference>
<dbReference type="InterPro" id="IPR036866">
    <property type="entry name" value="RibonucZ/Hydroxyglut_hydro"/>
</dbReference>
<dbReference type="NCBIfam" id="TIGR03413">
    <property type="entry name" value="GSH_gloB"/>
    <property type="match status" value="1"/>
</dbReference>
<dbReference type="PANTHER" id="PTHR43705">
    <property type="entry name" value="HYDROXYACYLGLUTATHIONE HYDROLASE"/>
    <property type="match status" value="1"/>
</dbReference>
<dbReference type="PANTHER" id="PTHR43705:SF1">
    <property type="entry name" value="HYDROXYACYLGLUTATHIONE HYDROLASE GLOB"/>
    <property type="match status" value="1"/>
</dbReference>
<dbReference type="Pfam" id="PF16123">
    <property type="entry name" value="HAGH_C"/>
    <property type="match status" value="1"/>
</dbReference>
<dbReference type="Pfam" id="PF00753">
    <property type="entry name" value="Lactamase_B"/>
    <property type="match status" value="1"/>
</dbReference>
<dbReference type="PIRSF" id="PIRSF005457">
    <property type="entry name" value="Glx"/>
    <property type="match status" value="1"/>
</dbReference>
<dbReference type="SMART" id="SM00849">
    <property type="entry name" value="Lactamase_B"/>
    <property type="match status" value="1"/>
</dbReference>
<dbReference type="SUPFAM" id="SSF56281">
    <property type="entry name" value="Metallo-hydrolase/oxidoreductase"/>
    <property type="match status" value="1"/>
</dbReference>
<gene>
    <name evidence="1" type="primary">gloB</name>
    <name type="ordered locus">Rmet_2206</name>
</gene>
<protein>
    <recommendedName>
        <fullName evidence="1">Hydroxyacylglutathione hydrolase</fullName>
        <ecNumber evidence="1">3.1.2.6</ecNumber>
    </recommendedName>
    <alternativeName>
        <fullName evidence="1">Glyoxalase II</fullName>
        <shortName evidence="1">Glx II</shortName>
    </alternativeName>
</protein>
<evidence type="ECO:0000255" key="1">
    <source>
        <dbReference type="HAMAP-Rule" id="MF_01374"/>
    </source>
</evidence>
<accession>Q1LL91</accession>
<keyword id="KW-0378">Hydrolase</keyword>
<keyword id="KW-0479">Metal-binding</keyword>
<keyword id="KW-1185">Reference proteome</keyword>
<keyword id="KW-0862">Zinc</keyword>